<sequence length="138" mass="15549">MRHGKVHRKLNRTAEHRKAMFANMSASLIKHEQIVTTLPKAKELRPIVEKLVTLGKKGGLAKRRQAISEMRDIDQVKKLFDVLAPRYKDRHGGYTRIIKAGFRYGDNAPMAVIEFVDRDVEAKGQDSGPVQNEASEAA</sequence>
<gene>
    <name evidence="1" type="primary">rplQ</name>
    <name type="ordered locus">Nwi_1389</name>
</gene>
<proteinExistence type="inferred from homology"/>
<comment type="subunit">
    <text evidence="1">Part of the 50S ribosomal subunit. Contacts protein L32.</text>
</comment>
<comment type="similarity">
    <text evidence="1">Belongs to the bacterial ribosomal protein bL17 family.</text>
</comment>
<evidence type="ECO:0000255" key="1">
    <source>
        <dbReference type="HAMAP-Rule" id="MF_01368"/>
    </source>
</evidence>
<evidence type="ECO:0000305" key="2"/>
<accession>Q3SSU1</accession>
<keyword id="KW-1185">Reference proteome</keyword>
<keyword id="KW-0687">Ribonucleoprotein</keyword>
<keyword id="KW-0689">Ribosomal protein</keyword>
<dbReference type="EMBL" id="CP000115">
    <property type="protein sequence ID" value="ABA04650.1"/>
    <property type="molecule type" value="Genomic_DNA"/>
</dbReference>
<dbReference type="RefSeq" id="WP_011314661.1">
    <property type="nucleotide sequence ID" value="NC_007406.1"/>
</dbReference>
<dbReference type="SMR" id="Q3SSU1"/>
<dbReference type="STRING" id="323098.Nwi_1389"/>
<dbReference type="KEGG" id="nwi:Nwi_1389"/>
<dbReference type="eggNOG" id="COG0203">
    <property type="taxonomic scope" value="Bacteria"/>
</dbReference>
<dbReference type="HOGENOM" id="CLU_074407_2_0_5"/>
<dbReference type="OrthoDB" id="9809073at2"/>
<dbReference type="Proteomes" id="UP000002531">
    <property type="component" value="Chromosome"/>
</dbReference>
<dbReference type="GO" id="GO:0022625">
    <property type="term" value="C:cytosolic large ribosomal subunit"/>
    <property type="evidence" value="ECO:0007669"/>
    <property type="project" value="TreeGrafter"/>
</dbReference>
<dbReference type="GO" id="GO:0003735">
    <property type="term" value="F:structural constituent of ribosome"/>
    <property type="evidence" value="ECO:0007669"/>
    <property type="project" value="InterPro"/>
</dbReference>
<dbReference type="GO" id="GO:0006412">
    <property type="term" value="P:translation"/>
    <property type="evidence" value="ECO:0007669"/>
    <property type="project" value="UniProtKB-UniRule"/>
</dbReference>
<dbReference type="FunFam" id="3.90.1030.10:FF:000001">
    <property type="entry name" value="50S ribosomal protein L17"/>
    <property type="match status" value="1"/>
</dbReference>
<dbReference type="Gene3D" id="3.90.1030.10">
    <property type="entry name" value="Ribosomal protein L17"/>
    <property type="match status" value="1"/>
</dbReference>
<dbReference type="HAMAP" id="MF_01368">
    <property type="entry name" value="Ribosomal_bL17"/>
    <property type="match status" value="1"/>
</dbReference>
<dbReference type="InterPro" id="IPR000456">
    <property type="entry name" value="Ribosomal_bL17"/>
</dbReference>
<dbReference type="InterPro" id="IPR047859">
    <property type="entry name" value="Ribosomal_bL17_CS"/>
</dbReference>
<dbReference type="InterPro" id="IPR036373">
    <property type="entry name" value="Ribosomal_bL17_sf"/>
</dbReference>
<dbReference type="NCBIfam" id="TIGR00059">
    <property type="entry name" value="L17"/>
    <property type="match status" value="1"/>
</dbReference>
<dbReference type="PANTHER" id="PTHR14413:SF16">
    <property type="entry name" value="LARGE RIBOSOMAL SUBUNIT PROTEIN BL17M"/>
    <property type="match status" value="1"/>
</dbReference>
<dbReference type="PANTHER" id="PTHR14413">
    <property type="entry name" value="RIBOSOMAL PROTEIN L17"/>
    <property type="match status" value="1"/>
</dbReference>
<dbReference type="Pfam" id="PF01196">
    <property type="entry name" value="Ribosomal_L17"/>
    <property type="match status" value="1"/>
</dbReference>
<dbReference type="SUPFAM" id="SSF64263">
    <property type="entry name" value="Prokaryotic ribosomal protein L17"/>
    <property type="match status" value="1"/>
</dbReference>
<dbReference type="PROSITE" id="PS01167">
    <property type="entry name" value="RIBOSOMAL_L17"/>
    <property type="match status" value="1"/>
</dbReference>
<feature type="chain" id="PRO_0000267901" description="Large ribosomal subunit protein bL17">
    <location>
        <begin position="1"/>
        <end position="138"/>
    </location>
</feature>
<reference key="1">
    <citation type="journal article" date="2006" name="Appl. Environ. Microbiol.">
        <title>Genome sequence of the chemolithoautotrophic nitrite-oxidizing bacterium Nitrobacter winogradskyi Nb-255.</title>
        <authorList>
            <person name="Starkenburg S.R."/>
            <person name="Chain P.S.G."/>
            <person name="Sayavedra-Soto L.A."/>
            <person name="Hauser L."/>
            <person name="Land M.L."/>
            <person name="Larimer F.W."/>
            <person name="Malfatti S.A."/>
            <person name="Klotz M.G."/>
            <person name="Bottomley P.J."/>
            <person name="Arp D.J."/>
            <person name="Hickey W.J."/>
        </authorList>
    </citation>
    <scope>NUCLEOTIDE SEQUENCE [LARGE SCALE GENOMIC DNA]</scope>
    <source>
        <strain>ATCC 25391 / DSM 10237 / CIP 104748 / NCIMB 11846 / Nb-255</strain>
    </source>
</reference>
<organism>
    <name type="scientific">Nitrobacter winogradskyi (strain ATCC 25391 / DSM 10237 / CIP 104748 / NCIMB 11846 / Nb-255)</name>
    <dbReference type="NCBI Taxonomy" id="323098"/>
    <lineage>
        <taxon>Bacteria</taxon>
        <taxon>Pseudomonadati</taxon>
        <taxon>Pseudomonadota</taxon>
        <taxon>Alphaproteobacteria</taxon>
        <taxon>Hyphomicrobiales</taxon>
        <taxon>Nitrobacteraceae</taxon>
        <taxon>Nitrobacter</taxon>
    </lineage>
</organism>
<name>RL17_NITWN</name>
<protein>
    <recommendedName>
        <fullName evidence="1">Large ribosomal subunit protein bL17</fullName>
    </recommendedName>
    <alternativeName>
        <fullName evidence="2">50S ribosomal protein L17</fullName>
    </alternativeName>
</protein>